<proteinExistence type="evidence at protein level"/>
<evidence type="ECO:0000250" key="1">
    <source>
        <dbReference type="UniProtKB" id="Q96242"/>
    </source>
</evidence>
<evidence type="ECO:0000269" key="2">
    <source>
    </source>
</evidence>
<evidence type="ECO:0000303" key="3">
    <source>
    </source>
</evidence>
<evidence type="ECO:0000303" key="4">
    <source ref="2"/>
</evidence>
<evidence type="ECO:0000305" key="5"/>
<evidence type="ECO:0000305" key="6">
    <source ref="2"/>
</evidence>
<gene>
    <name evidence="3" type="primary">DES</name>
    <name evidence="4" type="synonym">CYP74D1</name>
</gene>
<protein>
    <recommendedName>
        <fullName evidence="6">Divinyl ether synthase CYP74D1</fullName>
    </recommendedName>
    <alternativeName>
        <fullName evidence="3">9-divinyl ether synthase</fullName>
        <shortName evidence="3">LeDES</shortName>
    </alternativeName>
    <alternativeName>
        <fullName evidence="3">Colneleate synthase</fullName>
        <ecNumber evidence="2">4.2.1.121</ecNumber>
    </alternativeName>
    <alternativeName>
        <fullName evidence="4">Cytochrome P450 74D1</fullName>
    </alternativeName>
</protein>
<organism>
    <name type="scientific">Solanum lycopersicum</name>
    <name type="common">Tomato</name>
    <name type="synonym">Lycopersicon esculentum</name>
    <dbReference type="NCBI Taxonomy" id="4081"/>
    <lineage>
        <taxon>Eukaryota</taxon>
        <taxon>Viridiplantae</taxon>
        <taxon>Streptophyta</taxon>
        <taxon>Embryophyta</taxon>
        <taxon>Tracheophyta</taxon>
        <taxon>Spermatophyta</taxon>
        <taxon>Magnoliopsida</taxon>
        <taxon>eudicotyledons</taxon>
        <taxon>Gunneridae</taxon>
        <taxon>Pentapetalae</taxon>
        <taxon>asterids</taxon>
        <taxon>lamiids</taxon>
        <taxon>Solanales</taxon>
        <taxon>Solanaceae</taxon>
        <taxon>Solanoideae</taxon>
        <taxon>Solaneae</taxon>
        <taxon>Solanum</taxon>
        <taxon>Solanum subgen. Lycopersicon</taxon>
    </lineage>
</organism>
<name>DES_SOLLC</name>
<dbReference type="EC" id="4.2.1.121" evidence="2"/>
<dbReference type="EMBL" id="AF317515">
    <property type="protein sequence ID" value="AAG42261.1"/>
    <property type="molecule type" value="mRNA"/>
</dbReference>
<dbReference type="RefSeq" id="NP_001234527.1">
    <property type="nucleotide sequence ID" value="NM_001247598.1"/>
</dbReference>
<dbReference type="SMR" id="Q9FPM6"/>
<dbReference type="STRING" id="4081.Q9FPM6"/>
<dbReference type="PaxDb" id="4081-Solyc01g109140.2.1"/>
<dbReference type="EnsemblPlants" id="Solyc01g109140.3.1">
    <property type="protein sequence ID" value="Solyc01g109140.3.1"/>
    <property type="gene ID" value="Solyc01g109140.3"/>
</dbReference>
<dbReference type="GeneID" id="543675"/>
<dbReference type="Gramene" id="Solyc01g109140.3.1">
    <property type="protein sequence ID" value="Solyc01g109140.3.1"/>
    <property type="gene ID" value="Solyc01g109140.3"/>
</dbReference>
<dbReference type="KEGG" id="sly:543675"/>
<dbReference type="eggNOG" id="ENOG502QV50">
    <property type="taxonomic scope" value="Eukaryota"/>
</dbReference>
<dbReference type="HOGENOM" id="CLU_045757_0_0_1"/>
<dbReference type="InParanoid" id="Q9FPM6"/>
<dbReference type="OMA" id="NQGEDAW"/>
<dbReference type="OrthoDB" id="2789670at2759"/>
<dbReference type="PhylomeDB" id="Q9FPM6"/>
<dbReference type="BRENDA" id="4.2.1.121">
    <property type="organism ID" value="3101"/>
</dbReference>
<dbReference type="Proteomes" id="UP000004994">
    <property type="component" value="Chromosome 1"/>
</dbReference>
<dbReference type="GO" id="GO:0102895">
    <property type="term" value="F:colneleate synthase activity"/>
    <property type="evidence" value="ECO:0007669"/>
    <property type="project" value="UniProtKB-EC"/>
</dbReference>
<dbReference type="GO" id="GO:0020037">
    <property type="term" value="F:heme binding"/>
    <property type="evidence" value="ECO:0007669"/>
    <property type="project" value="InterPro"/>
</dbReference>
<dbReference type="GO" id="GO:0005506">
    <property type="term" value="F:iron ion binding"/>
    <property type="evidence" value="ECO:0007669"/>
    <property type="project" value="InterPro"/>
</dbReference>
<dbReference type="GO" id="GO:0004497">
    <property type="term" value="F:monooxygenase activity"/>
    <property type="evidence" value="ECO:0000318"/>
    <property type="project" value="GO_Central"/>
</dbReference>
<dbReference type="GO" id="GO:0016705">
    <property type="term" value="F:oxidoreductase activity, acting on paired donors, with incorporation or reduction of molecular oxygen"/>
    <property type="evidence" value="ECO:0007669"/>
    <property type="project" value="InterPro"/>
</dbReference>
<dbReference type="CDD" id="cd11071">
    <property type="entry name" value="CYP74"/>
    <property type="match status" value="1"/>
</dbReference>
<dbReference type="FunFam" id="1.10.630.10:FF:000024">
    <property type="entry name" value="Allene oxide synthase, chloroplastic"/>
    <property type="match status" value="1"/>
</dbReference>
<dbReference type="Gene3D" id="1.10.630.10">
    <property type="entry name" value="Cytochrome P450"/>
    <property type="match status" value="1"/>
</dbReference>
<dbReference type="InterPro" id="IPR001128">
    <property type="entry name" value="Cyt_P450"/>
</dbReference>
<dbReference type="InterPro" id="IPR002403">
    <property type="entry name" value="Cyt_P450_E_grp-IV"/>
</dbReference>
<dbReference type="InterPro" id="IPR036396">
    <property type="entry name" value="Cyt_P450_sf"/>
</dbReference>
<dbReference type="PANTHER" id="PTHR24286:SF253">
    <property type="entry name" value="9-DIVINYL ETHER SYNTHASE"/>
    <property type="match status" value="1"/>
</dbReference>
<dbReference type="PANTHER" id="PTHR24286">
    <property type="entry name" value="CYTOCHROME P450 26"/>
    <property type="match status" value="1"/>
</dbReference>
<dbReference type="Pfam" id="PF00067">
    <property type="entry name" value="p450"/>
    <property type="match status" value="1"/>
</dbReference>
<dbReference type="PRINTS" id="PR00465">
    <property type="entry name" value="EP450IV"/>
</dbReference>
<dbReference type="SUPFAM" id="SSF48264">
    <property type="entry name" value="Cytochrome P450"/>
    <property type="match status" value="1"/>
</dbReference>
<accession>Q9FPM6</accession>
<feature type="chain" id="PRO_0000415389" description="Divinyl ether synthase CYP74D1">
    <location>
        <begin position="1"/>
        <end position="478"/>
    </location>
</feature>
<feature type="binding site" description="axial binding residue" evidence="1">
    <location>
        <position position="431"/>
    </location>
    <ligand>
        <name>heme</name>
        <dbReference type="ChEBI" id="CHEBI:30413"/>
    </ligand>
    <ligandPart>
        <name>Fe</name>
        <dbReference type="ChEBI" id="CHEBI:18248"/>
    </ligandPart>
</feature>
<sequence>MSSYSELSNLPIREIPGDYGFPIISAIKDRYDYFYNQGEDAWFHNKAEKYKSTVVKINMAPGPFTSNDYKLVAFLDANSFVCMFDNSLIDKTDTLGGTFKPGKEYYGGYRPVAFIDTKDPNHAALKGYILSSFAKRHNLFIPLFRNTLSDHLFNNLEKQVTEQGKADFNALLPTMTFDFIFRLLCDQKNPSDTVLGAQGPEHLRKWLFPQLIPSLSAKKLPNIIEDMLFHNFLIPFGFIKSDYNKLVDAFSKSAVSMLDEAEKLGIKREEAVQNILFLVGINMFAGLNAFFPHLFRFVGEAGASLHTQLAKEIRSVIKEEGGAITLSAINKMSLVKSVVYETLRLRPPVPLQYGKAKKEFMVQSHDASYKINKGQFVVGYQPMASRDPKIFANPDEFVPDRFMNDGEKMLKHVLWSNGRETESPAPDNKQCPGKDLVHLLGRLILVEFFIRYDTFTLEITPLFRAPNVAFNTLTKASK</sequence>
<comment type="function">
    <text evidence="2">Involved in the biosynthesis of the anti-fungal toxins colneleate and colnelenate (PubMed:11060314). Can use (9S)-hydroperoxy-(10E,12Z)-octadecadienoate (9-HPOD) and (9S)-hydroperoxy-(10E,12Z,15Z)-octadecatrienoate (9-HPOT) as substrates, but has a very low activity with the corresponding 13-hydroperoxides (13-HPOD and 13-POT).</text>
</comment>
<comment type="catalytic activity">
    <reaction evidence="2">
        <text>(9S)-hydroperoxy-(10E,12Z)-octadecadienoate = colneleate + H2O</text>
        <dbReference type="Rhea" id="RHEA:28174"/>
        <dbReference type="ChEBI" id="CHEBI:15377"/>
        <dbReference type="ChEBI" id="CHEBI:60955"/>
        <dbReference type="ChEBI" id="CHEBI:60957"/>
        <dbReference type="EC" id="4.2.1.121"/>
    </reaction>
    <physiologicalReaction direction="left-to-right" evidence="2">
        <dbReference type="Rhea" id="RHEA:28175"/>
    </physiologicalReaction>
</comment>
<comment type="catalytic activity">
    <reaction evidence="2">
        <text>(9S)-hydroperoxy-(10E,12Z,15Z)-octadecatrienoate = colnelenate + H2O</text>
        <dbReference type="Rhea" id="RHEA:28178"/>
        <dbReference type="ChEBI" id="CHEBI:15377"/>
        <dbReference type="ChEBI" id="CHEBI:60960"/>
        <dbReference type="ChEBI" id="CHEBI:60962"/>
        <dbReference type="EC" id="4.2.1.121"/>
    </reaction>
    <physiologicalReaction direction="left-to-right" evidence="2">
        <dbReference type="Rhea" id="RHEA:28179"/>
    </physiologicalReaction>
</comment>
<comment type="biophysicochemical properties">
    <kinetics>
        <KM evidence="2">67 uM for (9S)-hydroperoxy-(10E,12Z)-octadecadienoate</KM>
        <KM evidence="2">48 uM for (9S)-hydroperoxy-(10E,12Z,15Z)-octadecatrienoate</KM>
        <text evidence="2">kcat is 890 sec(-1) for (9S)-hydroperoxy-(10E,12Z)-octadecadienoate (PubMed:11060314). kcat is 500 sec(-1) for (10E,12Z,15Z)-(9S)-9-hydroperoxyoctadeca-10,12,15-trienoic acid (PubMed:11060314).</text>
    </kinetics>
</comment>
<comment type="tissue specificity">
    <text evidence="2">Expressed in roots. Detected in stems, but not in flower buds, petioles, cotyledons or leaves.</text>
</comment>
<comment type="similarity">
    <text evidence="5">Belongs to the cytochrome P450 family. 9-divinyl ether synthase subfamily.</text>
</comment>
<keyword id="KW-0349">Heme</keyword>
<keyword id="KW-0408">Iron</keyword>
<keyword id="KW-0456">Lyase</keyword>
<keyword id="KW-0479">Metal-binding</keyword>
<keyword id="KW-1185">Reference proteome</keyword>
<reference key="1">
    <citation type="journal article" date="2001" name="J. Biol. Chem.">
        <title>Molecular cloning of a divinyl ether synthase. Identification as a CYP74 cytochrome P-450.</title>
        <authorList>
            <person name="Itoh A."/>
            <person name="Howe G.A."/>
        </authorList>
    </citation>
    <scope>NUCLEOTIDE SEQUENCE [MRNA]</scope>
    <scope>FUNCTION</scope>
    <scope>CATALYTIC ACTIVITY</scope>
    <scope>BIOPHYSICOCHEMICAL PROPERTIES</scope>
    <scope>TISSUE SPECIFICITY</scope>
    <source>
        <strain>cv. Castlemart</strain>
    </source>
</reference>
<reference key="2">
    <citation type="journal article" date="2008" name="Trop. Plant Biol.">
        <title>Comparison of cytochrome P450 genes from six plant genomes.</title>
        <authorList>
            <person name="Nelson D.R."/>
            <person name="Ming R."/>
            <person name="Alam M."/>
            <person name="Schuler M.A."/>
        </authorList>
    </citation>
    <scope>NOMENCLATURE</scope>
</reference>